<reference key="1">
    <citation type="journal article" date="1999" name="Nature">
        <title>Sequence and analysis of chromosome 2 of the plant Arabidopsis thaliana.</title>
        <authorList>
            <person name="Lin X."/>
            <person name="Kaul S."/>
            <person name="Rounsley S.D."/>
            <person name="Shea T.P."/>
            <person name="Benito M.-I."/>
            <person name="Town C.D."/>
            <person name="Fujii C.Y."/>
            <person name="Mason T.M."/>
            <person name="Bowman C.L."/>
            <person name="Barnstead M.E."/>
            <person name="Feldblyum T.V."/>
            <person name="Buell C.R."/>
            <person name="Ketchum K.A."/>
            <person name="Lee J.J."/>
            <person name="Ronning C.M."/>
            <person name="Koo H.L."/>
            <person name="Moffat K.S."/>
            <person name="Cronin L.A."/>
            <person name="Shen M."/>
            <person name="Pai G."/>
            <person name="Van Aken S."/>
            <person name="Umayam L."/>
            <person name="Tallon L.J."/>
            <person name="Gill J.E."/>
            <person name="Adams M.D."/>
            <person name="Carrera A.J."/>
            <person name="Creasy T.H."/>
            <person name="Goodman H.M."/>
            <person name="Somerville C.R."/>
            <person name="Copenhaver G.P."/>
            <person name="Preuss D."/>
            <person name="Nierman W.C."/>
            <person name="White O."/>
            <person name="Eisen J.A."/>
            <person name="Salzberg S.L."/>
            <person name="Fraser C.M."/>
            <person name="Venter J.C."/>
        </authorList>
    </citation>
    <scope>NUCLEOTIDE SEQUENCE [LARGE SCALE GENOMIC DNA]</scope>
    <source>
        <strain>cv. Columbia</strain>
    </source>
</reference>
<reference key="2">
    <citation type="journal article" date="2017" name="Plant J.">
        <title>Araport11: a complete reannotation of the Arabidopsis thaliana reference genome.</title>
        <authorList>
            <person name="Cheng C.Y."/>
            <person name="Krishnakumar V."/>
            <person name="Chan A.P."/>
            <person name="Thibaud-Nissen F."/>
            <person name="Schobel S."/>
            <person name="Town C.D."/>
        </authorList>
    </citation>
    <scope>GENOME REANNOTATION</scope>
    <source>
        <strain>cv. Columbia</strain>
    </source>
</reference>
<reference key="3">
    <citation type="journal article" date="2003" name="Science">
        <title>Empirical analysis of transcriptional activity in the Arabidopsis genome.</title>
        <authorList>
            <person name="Yamada K."/>
            <person name="Lim J."/>
            <person name="Dale J.M."/>
            <person name="Chen H."/>
            <person name="Shinn P."/>
            <person name="Palm C.J."/>
            <person name="Southwick A.M."/>
            <person name="Wu H.C."/>
            <person name="Kim C.J."/>
            <person name="Nguyen M."/>
            <person name="Pham P.K."/>
            <person name="Cheuk R.F."/>
            <person name="Karlin-Newmann G."/>
            <person name="Liu S.X."/>
            <person name="Lam B."/>
            <person name="Sakano H."/>
            <person name="Wu T."/>
            <person name="Yu G."/>
            <person name="Miranda M."/>
            <person name="Quach H.L."/>
            <person name="Tripp M."/>
            <person name="Chang C.H."/>
            <person name="Lee J.M."/>
            <person name="Toriumi M.J."/>
            <person name="Chan M.M."/>
            <person name="Tang C.C."/>
            <person name="Onodera C.S."/>
            <person name="Deng J.M."/>
            <person name="Akiyama K."/>
            <person name="Ansari Y."/>
            <person name="Arakawa T."/>
            <person name="Banh J."/>
            <person name="Banno F."/>
            <person name="Bowser L."/>
            <person name="Brooks S.Y."/>
            <person name="Carninci P."/>
            <person name="Chao Q."/>
            <person name="Choy N."/>
            <person name="Enju A."/>
            <person name="Goldsmith A.D."/>
            <person name="Gurjal M."/>
            <person name="Hansen N.F."/>
            <person name="Hayashizaki Y."/>
            <person name="Johnson-Hopson C."/>
            <person name="Hsuan V.W."/>
            <person name="Iida K."/>
            <person name="Karnes M."/>
            <person name="Khan S."/>
            <person name="Koesema E."/>
            <person name="Ishida J."/>
            <person name="Jiang P.X."/>
            <person name="Jones T."/>
            <person name="Kawai J."/>
            <person name="Kamiya A."/>
            <person name="Meyers C."/>
            <person name="Nakajima M."/>
            <person name="Narusaka M."/>
            <person name="Seki M."/>
            <person name="Sakurai T."/>
            <person name="Satou M."/>
            <person name="Tamse R."/>
            <person name="Vaysberg M."/>
            <person name="Wallender E.K."/>
            <person name="Wong C."/>
            <person name="Yamamura Y."/>
            <person name="Yuan S."/>
            <person name="Shinozaki K."/>
            <person name="Davis R.W."/>
            <person name="Theologis A."/>
            <person name="Ecker J.R."/>
        </authorList>
    </citation>
    <scope>NUCLEOTIDE SEQUENCE [LARGE SCALE MRNA]</scope>
    <source>
        <strain>cv. Columbia</strain>
    </source>
</reference>
<reference key="4">
    <citation type="journal article" date="2005" name="Mol. Plant Microbe Interact.">
        <title>Nematode-induced changes of transporter gene expression in Arabidopsis roots.</title>
        <authorList>
            <person name="Hammes U.Z."/>
            <person name="Schachtman D.P."/>
            <person name="Berg R.H."/>
            <person name="Nielsen E."/>
            <person name="Koch W."/>
            <person name="McIntyre L.M."/>
            <person name="Taylor C.G."/>
        </authorList>
    </citation>
    <scope>INDUCTION BY NEMATODES</scope>
</reference>
<reference key="5">
    <citation type="journal article" date="2007" name="FEBS Lett.">
        <title>Nitrate transporters and peptide transporters.</title>
        <authorList>
            <person name="Tsay Y.F."/>
            <person name="Chiu C.C."/>
            <person name="Tsai C.B."/>
            <person name="Ho C.H."/>
            <person name="Hsu P.K."/>
        </authorList>
    </citation>
    <scope>TISSUE SPECIFICITY</scope>
    <scope>GENE FAMILY</scope>
</reference>
<reference key="6">
    <citation type="journal article" date="2010" name="Plant Cell">
        <title>The Arabidopsis nitrate transporter NRT1.8 functions in nitrate removal from the xylem sap and mediates cadmium tolerance.</title>
        <authorList>
            <person name="Li J.Y."/>
            <person name="Fu Y.L."/>
            <person name="Pike S.M."/>
            <person name="Bao J."/>
            <person name="Tian W."/>
            <person name="Zhang Y."/>
            <person name="Chen C.Z."/>
            <person name="Zhang Y."/>
            <person name="Li H.M."/>
            <person name="Huang J."/>
            <person name="Li L.G."/>
            <person name="Schroeder J.I."/>
            <person name="Gassmann W."/>
            <person name="Gong J.M."/>
        </authorList>
    </citation>
    <scope>GENE FAMILY</scope>
</reference>
<reference key="7">
    <citation type="journal article" date="2014" name="Trends Plant Sci.">
        <title>A unified nomenclature of NITRATE TRANSPORTER 1/PEPTIDE TRANSPORTER family members in plants.</title>
        <authorList>
            <person name="Leran S."/>
            <person name="Varala K."/>
            <person name="Boyer J.C."/>
            <person name="Chiurazzi M."/>
            <person name="Crawford N."/>
            <person name="Daniel-Vedele F."/>
            <person name="David L."/>
            <person name="Dickstein R."/>
            <person name="Fernandez E."/>
            <person name="Forde B."/>
            <person name="Gassmann W."/>
            <person name="Geiger D."/>
            <person name="Gojon A."/>
            <person name="Gong J.M."/>
            <person name="Halkier B.A."/>
            <person name="Harris J.M."/>
            <person name="Hedrich R."/>
            <person name="Limami A.M."/>
            <person name="Rentsch D."/>
            <person name="Seo M."/>
            <person name="Tsay Y.F."/>
            <person name="Zhang M."/>
            <person name="Coruzzi G."/>
            <person name="Lacombe B."/>
        </authorList>
    </citation>
    <scope>GENE FAMILY</scope>
    <scope>NOMENCLATURE</scope>
</reference>
<organism>
    <name type="scientific">Arabidopsis thaliana</name>
    <name type="common">Mouse-ear cress</name>
    <dbReference type="NCBI Taxonomy" id="3702"/>
    <lineage>
        <taxon>Eukaryota</taxon>
        <taxon>Viridiplantae</taxon>
        <taxon>Streptophyta</taxon>
        <taxon>Embryophyta</taxon>
        <taxon>Tracheophyta</taxon>
        <taxon>Spermatophyta</taxon>
        <taxon>Magnoliopsida</taxon>
        <taxon>eudicotyledons</taxon>
        <taxon>Gunneridae</taxon>
        <taxon>Pentapetalae</taxon>
        <taxon>rosids</taxon>
        <taxon>malvids</taxon>
        <taxon>Brassicales</taxon>
        <taxon>Brassicaceae</taxon>
        <taxon>Camelineae</taxon>
        <taxon>Arabidopsis</taxon>
    </lineage>
</organism>
<comment type="subcellular location">
    <subcellularLocation>
        <location evidence="1">Membrane</location>
        <topology evidence="1">Multi-pass membrane protein</topology>
    </subcellularLocation>
</comment>
<comment type="tissue specificity">
    <text evidence="5">Expressed in flowers. Detected in stems, leaves and siliques.</text>
</comment>
<comment type="induction">
    <text evidence="4">Down-regulated upon nematode infection.</text>
</comment>
<comment type="similarity">
    <text evidence="6">Belongs to the major facilitator superfamily. Proton-dependent oligopeptide transporter (POT/PTR) (TC 2.A.17) family.</text>
</comment>
<proteinExistence type="evidence at transcript level"/>
<feature type="chain" id="PRO_0000399964" description="Protein NRT1/ PTR FAMILY 5.1">
    <location>
        <begin position="1"/>
        <end position="583"/>
    </location>
</feature>
<feature type="transmembrane region" description="Helical" evidence="3">
    <location>
        <begin position="74"/>
        <end position="94"/>
    </location>
</feature>
<feature type="transmembrane region" description="Helical" evidence="3">
    <location>
        <begin position="99"/>
        <end position="119"/>
    </location>
</feature>
<feature type="transmembrane region" description="Helical" evidence="3">
    <location>
        <begin position="134"/>
        <end position="154"/>
    </location>
</feature>
<feature type="transmembrane region" description="Helical" evidence="3">
    <location>
        <begin position="182"/>
        <end position="202"/>
    </location>
</feature>
<feature type="transmembrane region" description="Helical" evidence="3">
    <location>
        <begin position="210"/>
        <end position="230"/>
    </location>
</feature>
<feature type="transmembrane region" description="Helical" evidence="3">
    <location>
        <begin position="320"/>
        <end position="340"/>
    </location>
</feature>
<feature type="transmembrane region" description="Helical" evidence="3">
    <location>
        <begin position="361"/>
        <end position="381"/>
    </location>
</feature>
<feature type="transmembrane region" description="Helical" evidence="3">
    <location>
        <begin position="405"/>
        <end position="425"/>
    </location>
</feature>
<feature type="transmembrane region" description="Helical" evidence="3">
    <location>
        <begin position="446"/>
        <end position="466"/>
    </location>
</feature>
<feature type="transmembrane region" description="Helical" evidence="3">
    <location>
        <begin position="485"/>
        <end position="505"/>
    </location>
</feature>
<feature type="transmembrane region" description="Helical" evidence="3">
    <location>
        <begin position="529"/>
        <end position="549"/>
    </location>
</feature>
<feature type="modified residue" description="Phosphothreonine" evidence="2">
    <location>
        <position position="98"/>
    </location>
</feature>
<feature type="sequence conflict" description="In Ref. 3; AAL36253." evidence="6" ref="3">
    <original>E</original>
    <variation>G</variation>
    <location>
        <position position="477"/>
    </location>
</feature>
<dbReference type="EMBL" id="AC002336">
    <property type="protein sequence ID" value="AAB87590.1"/>
    <property type="molecule type" value="Genomic_DNA"/>
</dbReference>
<dbReference type="EMBL" id="CP002685">
    <property type="protein sequence ID" value="AEC09833.1"/>
    <property type="molecule type" value="Genomic_DNA"/>
</dbReference>
<dbReference type="EMBL" id="AY063897">
    <property type="protein sequence ID" value="AAL36253.1"/>
    <property type="molecule type" value="mRNA"/>
</dbReference>
<dbReference type="EMBL" id="AY094400">
    <property type="protein sequence ID" value="AAM19779.1"/>
    <property type="molecule type" value="mRNA"/>
</dbReference>
<dbReference type="EMBL" id="AY150513">
    <property type="protein sequence ID" value="AAN13029.1"/>
    <property type="molecule type" value="mRNA"/>
</dbReference>
<dbReference type="EMBL" id="BT002242">
    <property type="protein sequence ID" value="AAN72253.1"/>
    <property type="molecule type" value="mRNA"/>
</dbReference>
<dbReference type="PIR" id="G84829">
    <property type="entry name" value="G84829"/>
</dbReference>
<dbReference type="RefSeq" id="NP_181578.1">
    <property type="nucleotide sequence ID" value="NM_129607.4"/>
</dbReference>
<dbReference type="SMR" id="Q8VZR7"/>
<dbReference type="BioGRID" id="3978">
    <property type="interactions" value="5"/>
</dbReference>
<dbReference type="FunCoup" id="Q8VZR7">
    <property type="interactions" value="1716"/>
</dbReference>
<dbReference type="IntAct" id="Q8VZR7">
    <property type="interactions" value="5"/>
</dbReference>
<dbReference type="STRING" id="3702.Q8VZR7"/>
<dbReference type="TCDB" id="2.A.17.3.23">
    <property type="family name" value="the proton-dependent oligopeptide transporter (pot/ptr) family"/>
</dbReference>
<dbReference type="iPTMnet" id="Q8VZR7"/>
<dbReference type="PaxDb" id="3702-AT2G40460.1"/>
<dbReference type="ProteomicsDB" id="226436"/>
<dbReference type="EnsemblPlants" id="AT2G40460.1">
    <property type="protein sequence ID" value="AT2G40460.1"/>
    <property type="gene ID" value="AT2G40460"/>
</dbReference>
<dbReference type="GeneID" id="818640"/>
<dbReference type="Gramene" id="AT2G40460.1">
    <property type="protein sequence ID" value="AT2G40460.1"/>
    <property type="gene ID" value="AT2G40460"/>
</dbReference>
<dbReference type="KEGG" id="ath:AT2G40460"/>
<dbReference type="Araport" id="AT2G40460"/>
<dbReference type="TAIR" id="AT2G40460"/>
<dbReference type="eggNOG" id="KOG1237">
    <property type="taxonomic scope" value="Eukaryota"/>
</dbReference>
<dbReference type="HOGENOM" id="CLU_009313_4_1_1"/>
<dbReference type="InParanoid" id="Q8VZR7"/>
<dbReference type="OMA" id="FKCCISP"/>
<dbReference type="OrthoDB" id="8904098at2759"/>
<dbReference type="PhylomeDB" id="Q8VZR7"/>
<dbReference type="PRO" id="PR:Q8VZR7"/>
<dbReference type="Proteomes" id="UP000006548">
    <property type="component" value="Chromosome 2"/>
</dbReference>
<dbReference type="ExpressionAtlas" id="Q8VZR7">
    <property type="expression patterns" value="baseline and differential"/>
</dbReference>
<dbReference type="GO" id="GO:0016020">
    <property type="term" value="C:membrane"/>
    <property type="evidence" value="ECO:0007669"/>
    <property type="project" value="UniProtKB-SubCell"/>
</dbReference>
<dbReference type="GO" id="GO:0071916">
    <property type="term" value="F:dipeptide transmembrane transporter activity"/>
    <property type="evidence" value="ECO:0007669"/>
    <property type="project" value="InterPro"/>
</dbReference>
<dbReference type="GO" id="GO:0042937">
    <property type="term" value="F:tripeptide transmembrane transporter activity"/>
    <property type="evidence" value="ECO:0007669"/>
    <property type="project" value="InterPro"/>
</dbReference>
<dbReference type="GO" id="GO:0009624">
    <property type="term" value="P:response to nematode"/>
    <property type="evidence" value="ECO:0007007"/>
    <property type="project" value="TAIR"/>
</dbReference>
<dbReference type="CDD" id="cd17417">
    <property type="entry name" value="MFS_NPF5"/>
    <property type="match status" value="1"/>
</dbReference>
<dbReference type="FunFam" id="1.20.1250.20:FF:000037">
    <property type="entry name" value="Protein NRT1/ PTR FAMILY 5.2"/>
    <property type="match status" value="1"/>
</dbReference>
<dbReference type="Gene3D" id="1.20.1250.20">
    <property type="entry name" value="MFS general substrate transporter like domains"/>
    <property type="match status" value="1"/>
</dbReference>
<dbReference type="InterPro" id="IPR036259">
    <property type="entry name" value="MFS_trans_sf"/>
</dbReference>
<dbReference type="InterPro" id="IPR044739">
    <property type="entry name" value="NRT1/PTR"/>
</dbReference>
<dbReference type="InterPro" id="IPR000109">
    <property type="entry name" value="POT_fam"/>
</dbReference>
<dbReference type="PANTHER" id="PTHR11654">
    <property type="entry name" value="OLIGOPEPTIDE TRANSPORTER-RELATED"/>
    <property type="match status" value="1"/>
</dbReference>
<dbReference type="Pfam" id="PF00854">
    <property type="entry name" value="PTR2"/>
    <property type="match status" value="1"/>
</dbReference>
<dbReference type="SUPFAM" id="SSF103473">
    <property type="entry name" value="MFS general substrate transporter"/>
    <property type="match status" value="1"/>
</dbReference>
<accession>Q8VZR7</accession>
<accession>O22889</accession>
<sequence length="583" mass="64824">MEAAKVYTQDGTVDLQGRPVLASKTGRWRACSFLLGYEAFERMAFYGIASNLVNYLTKRLHEDTISSVRNVNNWSGAVWITPIAGAYIADSYIGRFWTFTASSLIYVLGMILLTMAVTVKSLRPTCENGVCNKASSLQVTFFYISLYTIAIGAGGTKPNISTFGADQFDSYSIEEKKQKVSFFNWWMFSSFLGALFATLGLVYIQENLGWGLGYGIPTVGLLVSLVVFYIGTPFYRHKVIKTDNLAKDLVQVPIAAFKNRKLQCPDDHLELYELDSHYYKSNGKHQVHHTPVFRFLDKAAIKTSSRVPCTVTKVEVAKRVLGLIFIWLVTLIPSTLWAQVNTLFVKQGTTLDRKIGSNFQIPAASLGSFVTLSMLLSVPMYDQSFVPFMRKKTGNPRGITLLQRLGVGFAIQIVAIAIASAVEVKRMRVIKEFHITSPTQVVPMSIFWLLPQYSLLGIGDVFNAIGLLEFFYDQSPEEMQSLGTTFFTSGIGLGNFLNSFLVTMIDKITSKGGGKSWIGNNLNDSRLDYYYGFLVVISIVNMGLFVWAASKYVYKSDDDTKEFSGGGCVQMEAKALDTSPLSI</sequence>
<evidence type="ECO:0000250" key="1"/>
<evidence type="ECO:0000250" key="2">
    <source>
        <dbReference type="UniProtKB" id="Q05085"/>
    </source>
</evidence>
<evidence type="ECO:0000255" key="3"/>
<evidence type="ECO:0000269" key="4">
    <source>
    </source>
</evidence>
<evidence type="ECO:0000269" key="5">
    <source>
    </source>
</evidence>
<evidence type="ECO:0000305" key="6"/>
<keyword id="KW-0472">Membrane</keyword>
<keyword id="KW-0597">Phosphoprotein</keyword>
<keyword id="KW-1185">Reference proteome</keyword>
<keyword id="KW-0812">Transmembrane</keyword>
<keyword id="KW-1133">Transmembrane helix</keyword>
<keyword id="KW-0813">Transport</keyword>
<name>PTR30_ARATH</name>
<protein>
    <recommendedName>
        <fullName>Protein NRT1/ PTR FAMILY 5.1</fullName>
        <shortName>AtNPF5.1</shortName>
    </recommendedName>
</protein>
<gene>
    <name type="primary">NPF5.1</name>
    <name type="ordered locus">At2g40460</name>
    <name type="ORF">T2P4.19</name>
</gene>